<reference key="1">
    <citation type="journal article" date="1996" name="Gene">
        <title>Molecular cloning of two novel rab genes from human melanocytes.</title>
        <authorList>
            <person name="Chen D."/>
            <person name="Guo J."/>
            <person name="Miki T."/>
            <person name="Tachibana M."/>
            <person name="Gahl W.A."/>
        </authorList>
    </citation>
    <scope>NUCLEOTIDE SEQUENCE [MRNA] (ISOFORM 1)</scope>
    <source>
        <tissue>Melanocyte</tissue>
    </source>
</reference>
<reference key="2">
    <citation type="submission" date="2002-04" db="EMBL/GenBank/DDBJ databases">
        <title>cDNA clones of human proteins involved in signal transduction sequenced by the Guthrie cDNA resource center (www.cdna.org).</title>
        <authorList>
            <person name="Puhl H.L. III"/>
            <person name="Ikeda S.R."/>
            <person name="Aronstam R.S."/>
        </authorList>
    </citation>
    <scope>NUCLEOTIDE SEQUENCE [LARGE SCALE MRNA] (ISOFORM 1)</scope>
    <source>
        <tissue>Brain</tissue>
    </source>
</reference>
<reference key="3">
    <citation type="submission" date="2004-06" db="EMBL/GenBank/DDBJ databases">
        <title>Cloning of human full open reading frames in Gateway(TM) system entry vector (pDONR201).</title>
        <authorList>
            <person name="Halleck A."/>
            <person name="Ebert L."/>
            <person name="Mkoundinya M."/>
            <person name="Schick M."/>
            <person name="Eisenstein S."/>
            <person name="Neubert P."/>
            <person name="Kstrang K."/>
            <person name="Schatten R."/>
            <person name="Shen B."/>
            <person name="Henze S."/>
            <person name="Mar W."/>
            <person name="Korn B."/>
            <person name="Zuo D."/>
            <person name="Hu Y."/>
            <person name="LaBaer J."/>
        </authorList>
    </citation>
    <scope>NUCLEOTIDE SEQUENCE [LARGE SCALE MRNA] (ISOFORM 1)</scope>
</reference>
<reference key="4">
    <citation type="journal article" date="2007" name="BMC Genomics">
        <title>The full-ORF clone resource of the German cDNA consortium.</title>
        <authorList>
            <person name="Bechtel S."/>
            <person name="Rosenfelder H."/>
            <person name="Duda A."/>
            <person name="Schmidt C.P."/>
            <person name="Ernst U."/>
            <person name="Wellenreuther R."/>
            <person name="Mehrle A."/>
            <person name="Schuster C."/>
            <person name="Bahr A."/>
            <person name="Bloecker H."/>
            <person name="Heubner D."/>
            <person name="Hoerlein A."/>
            <person name="Michel G."/>
            <person name="Wedler H."/>
            <person name="Koehrer K."/>
            <person name="Ottenwaelder B."/>
            <person name="Poustka A."/>
            <person name="Wiemann S."/>
            <person name="Schupp I."/>
        </authorList>
    </citation>
    <scope>NUCLEOTIDE SEQUENCE [LARGE SCALE MRNA] (ISOFORM 2)</scope>
    <source>
        <tissue>Uterus</tissue>
    </source>
</reference>
<reference key="5">
    <citation type="journal article" date="2006" name="Nature">
        <title>Human chromosome 11 DNA sequence and analysis including novel gene identification.</title>
        <authorList>
            <person name="Taylor T.D."/>
            <person name="Noguchi H."/>
            <person name="Totoki Y."/>
            <person name="Toyoda A."/>
            <person name="Kuroki Y."/>
            <person name="Dewar K."/>
            <person name="Lloyd C."/>
            <person name="Itoh T."/>
            <person name="Takeda T."/>
            <person name="Kim D.-W."/>
            <person name="She X."/>
            <person name="Barlow K.F."/>
            <person name="Bloom T."/>
            <person name="Bruford E."/>
            <person name="Chang J.L."/>
            <person name="Cuomo C.A."/>
            <person name="Eichler E."/>
            <person name="FitzGerald M.G."/>
            <person name="Jaffe D.B."/>
            <person name="LaButti K."/>
            <person name="Nicol R."/>
            <person name="Park H.-S."/>
            <person name="Seaman C."/>
            <person name="Sougnez C."/>
            <person name="Yang X."/>
            <person name="Zimmer A.R."/>
            <person name="Zody M.C."/>
            <person name="Birren B.W."/>
            <person name="Nusbaum C."/>
            <person name="Fujiyama A."/>
            <person name="Hattori M."/>
            <person name="Rogers J."/>
            <person name="Lander E.S."/>
            <person name="Sakaki Y."/>
        </authorList>
    </citation>
    <scope>NUCLEOTIDE SEQUENCE [LARGE SCALE GENOMIC DNA]</scope>
</reference>
<reference key="6">
    <citation type="journal article" date="2004" name="Genome Res.">
        <title>The status, quality, and expansion of the NIH full-length cDNA project: the Mammalian Gene Collection (MGC).</title>
        <authorList>
            <consortium name="The MGC Project Team"/>
        </authorList>
    </citation>
    <scope>NUCLEOTIDE SEQUENCE [LARGE SCALE MRNA] (ISOFORM 1)</scope>
    <source>
        <tissue>B-cell</tissue>
    </source>
</reference>
<reference key="7">
    <citation type="journal article" date="2008" name="Mol. Cell">
        <title>Kinase-selective enrichment enables quantitative phosphoproteomics of the kinome across the cell cycle.</title>
        <authorList>
            <person name="Daub H."/>
            <person name="Olsen J.V."/>
            <person name="Bairlein M."/>
            <person name="Gnad F."/>
            <person name="Oppermann F.S."/>
            <person name="Korner R."/>
            <person name="Greff Z."/>
            <person name="Keri G."/>
            <person name="Stemmann O."/>
            <person name="Mann M."/>
        </authorList>
    </citation>
    <scope>IDENTIFICATION BY MASS SPECTROMETRY [LARGE SCALE ANALYSIS]</scope>
    <source>
        <tissue>Cervix carcinoma</tissue>
    </source>
</reference>
<reference key="8">
    <citation type="journal article" date="2010" name="Sci. Signal.">
        <title>Quantitative phosphoproteomics reveals widespread full phosphorylation site occupancy during mitosis.</title>
        <authorList>
            <person name="Olsen J.V."/>
            <person name="Vermeulen M."/>
            <person name="Santamaria A."/>
            <person name="Kumar C."/>
            <person name="Miller M.L."/>
            <person name="Jensen L.J."/>
            <person name="Gnad F."/>
            <person name="Cox J."/>
            <person name="Jensen T.S."/>
            <person name="Nigg E.A."/>
            <person name="Brunak S."/>
            <person name="Mann M."/>
        </authorList>
    </citation>
    <scope>IDENTIFICATION BY MASS SPECTROMETRY [LARGE SCALE ANALYSIS]</scope>
    <source>
        <tissue>Cervix carcinoma</tissue>
    </source>
</reference>
<reference key="9">
    <citation type="journal article" date="2011" name="BMC Syst. Biol.">
        <title>Initial characterization of the human central proteome.</title>
        <authorList>
            <person name="Burkard T.R."/>
            <person name="Planyavsky M."/>
            <person name="Kaupe I."/>
            <person name="Breitwieser F.P."/>
            <person name="Buerckstuemmer T."/>
            <person name="Bennett K.L."/>
            <person name="Superti-Furga G."/>
            <person name="Colinge J."/>
        </authorList>
    </citation>
    <scope>IDENTIFICATION BY MASS SPECTROMETRY [LARGE SCALE ANALYSIS]</scope>
</reference>
<reference key="10">
    <citation type="journal article" date="2012" name="Biol. Cell">
        <title>Rab30 is required for the morphological integrity of the Golgi apparatus.</title>
        <authorList>
            <person name="Kelly E.E."/>
            <person name="Giordano F."/>
            <person name="Horgan C.P."/>
            <person name="Jollivet F."/>
            <person name="Raposo G."/>
            <person name="McCaffrey M.W."/>
        </authorList>
    </citation>
    <scope>FUNCTION</scope>
    <scope>SUBCELLULAR LOCATION</scope>
</reference>
<reference key="11">
    <citation type="journal article" date="2016" name="PLoS ONE">
        <title>Golgi-Resident GTPase Rab30 Promotes the Biogenesis of Pathogen-Containing Autophagosomes.</title>
        <authorList>
            <person name="Oda S."/>
            <person name="Nozawa T."/>
            <person name="Nozawa-Minowa A."/>
            <person name="Tanaka M."/>
            <person name="Aikawa C."/>
            <person name="Harada H."/>
            <person name="Nakagawa I."/>
        </authorList>
    </citation>
    <scope>FUNCTION</scope>
    <scope>SUBCELLULAR LOCATION</scope>
    <scope>MUTAGENESIS OF THR-23 AND GLN-68</scope>
</reference>
<reference evidence="12" key="12">
    <citation type="submission" date="2009-02" db="PDB data bank">
        <title>Crystal structure of RAB30 in complex with a GTP analogue.</title>
        <authorList>
            <consortium name="Structural genomics consortium (SGC)"/>
        </authorList>
    </citation>
    <scope>X-RAY CRYSTALLOGRAPHY (2.0 ANGSTROMS) OF 2-184 IN COMPLEX WITH GTP ANALOG AND MG(2+)</scope>
    <scope>COFACTOR</scope>
</reference>
<proteinExistence type="evidence at protein level"/>
<accession>Q15771</accession>
<accession>Q6FGK1</accession>
<accession>Q6MZH2</accession>
<accession>Q96CI8</accession>
<keyword id="KW-0002">3D-structure</keyword>
<keyword id="KW-0025">Alternative splicing</keyword>
<keyword id="KW-0963">Cytoplasm</keyword>
<keyword id="KW-0968">Cytoplasmic vesicle</keyword>
<keyword id="KW-0333">Golgi apparatus</keyword>
<keyword id="KW-0342">GTP-binding</keyword>
<keyword id="KW-0378">Hydrolase</keyword>
<keyword id="KW-0449">Lipoprotein</keyword>
<keyword id="KW-0458">Lysosome</keyword>
<keyword id="KW-0460">Magnesium</keyword>
<keyword id="KW-0472">Membrane</keyword>
<keyword id="KW-0479">Metal-binding</keyword>
<keyword id="KW-0488">Methylation</keyword>
<keyword id="KW-0547">Nucleotide-binding</keyword>
<keyword id="KW-0636">Prenylation</keyword>
<keyword id="KW-1267">Proteomics identification</keyword>
<keyword id="KW-1185">Reference proteome</keyword>
<feature type="chain" id="PRO_0000121230" description="Ras-related protein Rab-30">
    <location>
        <begin position="1"/>
        <end position="200"/>
    </location>
</feature>
<feature type="propeptide" id="PRO_0000370826" description="Removed in mature form" evidence="3">
    <location>
        <begin position="201"/>
        <end position="203"/>
    </location>
</feature>
<feature type="region of interest" description="Switch-I" evidence="4">
    <location>
        <begin position="36"/>
        <end position="44"/>
    </location>
</feature>
<feature type="region of interest" description="Switch-II" evidence="4">
    <location>
        <begin position="67"/>
        <end position="83"/>
    </location>
</feature>
<feature type="binding site" evidence="10 12">
    <location>
        <position position="20"/>
    </location>
    <ligand>
        <name>GTP</name>
        <dbReference type="ChEBI" id="CHEBI:37565"/>
    </ligand>
</feature>
<feature type="binding site" evidence="10 12">
    <location>
        <position position="21"/>
    </location>
    <ligand>
        <name>GTP</name>
        <dbReference type="ChEBI" id="CHEBI:37565"/>
    </ligand>
</feature>
<feature type="binding site" evidence="10 12">
    <location>
        <position position="22"/>
    </location>
    <ligand>
        <name>GTP</name>
        <dbReference type="ChEBI" id="CHEBI:37565"/>
    </ligand>
</feature>
<feature type="binding site" evidence="10 12">
    <location>
        <position position="23"/>
    </location>
    <ligand>
        <name>GTP</name>
        <dbReference type="ChEBI" id="CHEBI:37565"/>
    </ligand>
</feature>
<feature type="binding site" evidence="7 12">
    <location>
        <position position="23"/>
    </location>
    <ligand>
        <name>Mg(2+)</name>
        <dbReference type="ChEBI" id="CHEBI:18420"/>
    </ligand>
</feature>
<feature type="binding site" evidence="10 12">
    <location>
        <position position="24"/>
    </location>
    <ligand>
        <name>GTP</name>
        <dbReference type="ChEBI" id="CHEBI:37565"/>
    </ligand>
</feature>
<feature type="binding site" evidence="10 12">
    <location>
        <position position="41"/>
    </location>
    <ligand>
        <name>GTP</name>
        <dbReference type="ChEBI" id="CHEBI:37565"/>
    </ligand>
</feature>
<feature type="binding site" evidence="7 12">
    <location>
        <position position="41"/>
    </location>
    <ligand>
        <name>Mg(2+)</name>
        <dbReference type="ChEBI" id="CHEBI:18420"/>
    </ligand>
</feature>
<feature type="binding site" evidence="1">
    <location>
        <position position="64"/>
    </location>
    <ligand>
        <name>Mg(2+)</name>
        <dbReference type="ChEBI" id="CHEBI:18420"/>
    </ligand>
</feature>
<feature type="binding site" evidence="10 12">
    <location>
        <position position="67"/>
    </location>
    <ligand>
        <name>GTP</name>
        <dbReference type="ChEBI" id="CHEBI:37565"/>
    </ligand>
</feature>
<feature type="binding site" evidence="10 12">
    <location>
        <position position="122"/>
    </location>
    <ligand>
        <name>GTP</name>
        <dbReference type="ChEBI" id="CHEBI:37565"/>
    </ligand>
</feature>
<feature type="binding site" evidence="10 12">
    <location>
        <position position="123"/>
    </location>
    <ligand>
        <name>GTP</name>
        <dbReference type="ChEBI" id="CHEBI:37565"/>
    </ligand>
</feature>
<feature type="binding site" evidence="10 12">
    <location>
        <position position="125"/>
    </location>
    <ligand>
        <name>GTP</name>
        <dbReference type="ChEBI" id="CHEBI:37565"/>
    </ligand>
</feature>
<feature type="binding site" evidence="10 12">
    <location>
        <position position="153"/>
    </location>
    <ligand>
        <name>GTP</name>
        <dbReference type="ChEBI" id="CHEBI:37565"/>
    </ligand>
</feature>
<feature type="binding site" evidence="10 12">
    <location>
        <position position="154"/>
    </location>
    <ligand>
        <name>GTP</name>
        <dbReference type="ChEBI" id="CHEBI:37565"/>
    </ligand>
</feature>
<feature type="modified residue" description="Cysteine methyl ester" evidence="3">
    <location>
        <position position="200"/>
    </location>
</feature>
<feature type="lipid moiety-binding region" description="S-geranylgeranyl cysteine" evidence="1">
    <location>
        <position position="199"/>
    </location>
</feature>
<feature type="lipid moiety-binding region" description="S-geranylgeranyl cysteine" evidence="1">
    <location>
        <position position="200"/>
    </location>
</feature>
<feature type="splice variant" id="VSP_055833" description="In isoform 2." evidence="8">
    <original>VGNKIDLAERREVSQQRAEEFSEAQDMYYLETSAKESDNVEKLFL</original>
    <variation>ATRLTWLKGERFPSSELKNSQKLRTCIIWRPQPRNLIMWRNSSLT</variation>
    <location>
        <begin position="120"/>
        <end position="164"/>
    </location>
</feature>
<feature type="splice variant" id="VSP_055834" description="In isoform 2." evidence="8">
    <location>
        <begin position="165"/>
        <end position="203"/>
    </location>
</feature>
<feature type="mutagenesis site" description="Constitutively inactive (GDP-bound) mutant. Decreased colocalization with group A Streptococcus-containing autophagosome-like vacuoles." evidence="6">
    <original>T</original>
    <variation>N</variation>
    <location>
        <position position="23"/>
    </location>
</feature>
<feature type="mutagenesis site" description="Constitutively active (GTP-bound) mutant. Increased colocalization with group A Streptococcus-containing autophagosome-like vacuoles." evidence="6">
    <original>Q</original>
    <variation>L</variation>
    <location>
        <position position="68"/>
    </location>
</feature>
<feature type="sequence conflict" description="In Ref. 1; AAC50774." evidence="9" ref="1">
    <original>D</original>
    <variation>G</variation>
    <location>
        <position position="45"/>
    </location>
</feature>
<feature type="strand" evidence="13">
    <location>
        <begin position="7"/>
        <end position="17"/>
    </location>
</feature>
<feature type="helix" evidence="13">
    <location>
        <begin position="22"/>
        <end position="31"/>
    </location>
</feature>
<feature type="strand" evidence="13">
    <location>
        <begin position="43"/>
        <end position="53"/>
    </location>
</feature>
<feature type="strand" evidence="13">
    <location>
        <begin position="56"/>
        <end position="65"/>
    </location>
</feature>
<feature type="helix" evidence="13">
    <location>
        <begin position="69"/>
        <end position="71"/>
    </location>
</feature>
<feature type="helix" evidence="13">
    <location>
        <begin position="72"/>
        <end position="75"/>
    </location>
</feature>
<feature type="helix" evidence="13">
    <location>
        <begin position="76"/>
        <end position="78"/>
    </location>
</feature>
<feature type="strand" evidence="13">
    <location>
        <begin position="83"/>
        <end position="90"/>
    </location>
</feature>
<feature type="helix" evidence="13">
    <location>
        <begin position="94"/>
        <end position="98"/>
    </location>
</feature>
<feature type="helix" evidence="13">
    <location>
        <begin position="100"/>
        <end position="110"/>
    </location>
</feature>
<feature type="strand" evidence="13">
    <location>
        <begin position="116"/>
        <end position="122"/>
    </location>
</feature>
<feature type="helix" evidence="13">
    <location>
        <begin position="124"/>
        <end position="129"/>
    </location>
</feature>
<feature type="helix" evidence="13">
    <location>
        <begin position="134"/>
        <end position="144"/>
    </location>
</feature>
<feature type="strand" evidence="13">
    <location>
        <begin position="148"/>
        <end position="150"/>
    </location>
</feature>
<feature type="turn" evidence="13">
    <location>
        <begin position="153"/>
        <end position="155"/>
    </location>
</feature>
<feature type="helix" evidence="13">
    <location>
        <begin position="159"/>
        <end position="174"/>
    </location>
</feature>
<comment type="function">
    <text evidence="2 5 6">The small GTPases Rab are key regulators of intracellular membrane trafficking, from the formation of transport vesicles to their fusion with membranes. Rabs cycle between an inactive GDP-bound form and an active GTP-bound form that is able to recruit to membranes different sets of downstream effectors directly responsible for vesicle formation, movement, tethering and fusion (PubMed:22188167). RAB30 is required for maintaining the structural integrity of the Golgi apparatus, possibly by mediating interactions with cytoplasmic scaffolding proteins (PubMed:22188167). Facilitates lipid homeostasis during fasting by regulating hepatic protein and lipid trafficking in a PPAR-alpha-dependent manner (By similarity). Promotes autophagosome biogenesis during bacterial infection such as group A Streptococcus infection (PubMed:26771875).</text>
</comment>
<comment type="catalytic activity">
    <reaction evidence="1">
        <text>GTP + H2O = GDP + phosphate + H(+)</text>
        <dbReference type="Rhea" id="RHEA:19669"/>
        <dbReference type="ChEBI" id="CHEBI:15377"/>
        <dbReference type="ChEBI" id="CHEBI:15378"/>
        <dbReference type="ChEBI" id="CHEBI:37565"/>
        <dbReference type="ChEBI" id="CHEBI:43474"/>
        <dbReference type="ChEBI" id="CHEBI:58189"/>
        <dbReference type="EC" id="3.6.5.2"/>
    </reaction>
    <physiologicalReaction direction="left-to-right" evidence="1">
        <dbReference type="Rhea" id="RHEA:19670"/>
    </physiologicalReaction>
</comment>
<comment type="cofactor">
    <cofactor evidence="7">
        <name>Mg(2+)</name>
        <dbReference type="ChEBI" id="CHEBI:18420"/>
    </cofactor>
</comment>
<comment type="activity regulation">
    <text evidence="9">Regulated by guanine nucleotide exchange factors (GEFs) which promote the exchange of bound GDP for free GTP. Regulated by GTPase activating proteins (GAPs) which increase the GTP hydrolysis activity (Probable). Inhibited by GDP dissociation inhibitors (GDIs) (Probable).</text>
</comment>
<comment type="interaction">
    <interactant intactId="EBI-3924277">
        <id>Q15771</id>
    </interactant>
    <interactant intactId="EBI-11522760">
        <id>Q6RW13-2</id>
        <label>AGTRAP</label>
    </interactant>
    <organismsDiffer>false</organismsDiffer>
    <experiments>3</experiments>
</comment>
<comment type="subcellular location">
    <subcellularLocation>
        <location evidence="9">Membrane</location>
        <topology evidence="9">Lipid-anchor</topology>
        <orientation evidence="9">Cytoplasmic side</orientation>
    </subcellularLocation>
    <subcellularLocation>
        <location evidence="5">Golgi apparatus</location>
        <location evidence="5">trans-Golgi network membrane</location>
    </subcellularLocation>
    <subcellularLocation>
        <location evidence="6">Golgi apparatus</location>
        <location evidence="6">cis-Golgi network membrane</location>
    </subcellularLocation>
    <subcellularLocation>
        <location evidence="5">Golgi apparatus membrane</location>
    </subcellularLocation>
    <subcellularLocation>
        <location evidence="5">Cytoplasm</location>
    </subcellularLocation>
    <subcellularLocation>
        <location evidence="6">Cytoplasmic vesicle</location>
        <location evidence="6">Autophagosome membrane</location>
    </subcellularLocation>
    <subcellularLocation>
        <location evidence="6">Autolysosome membrane</location>
    </subcellularLocation>
    <text evidence="2 6">Localized to dynamic membranes fusing to and exiting from the Golgi apparatus (By similarity). Localized to group A Streptococcus (GAS)-containing autophagosome to autolysosome in GAS-infected epithelial cells (PubMed:26771875). Also colocalized with a starvation-induced autophagosome although not required for autophagosome formation during starvation (PubMed:26771875).</text>
</comment>
<comment type="alternative products">
    <event type="alternative splicing"/>
    <isoform>
        <id>Q15771-1</id>
        <name>1</name>
        <sequence type="displayed"/>
    </isoform>
    <isoform>
        <id>Q15771-2</id>
        <name>2</name>
        <sequence type="described" ref="VSP_055833 VSP_055834"/>
    </isoform>
</comment>
<comment type="domain">
    <text evidence="1">Switch I, switch II and the interswitch regions are characteristic of Rab GTPases and mediate the interactions with Rab downstream effectors. The switch regions undergo conformational changes upon nucleotide binding which drive interaction with specific sets of effector proteins, with most effectors only binding to GTP-bound Rab.</text>
</comment>
<comment type="similarity">
    <text evidence="9">Belongs to the small GTPase superfamily. Rab family.</text>
</comment>
<evidence type="ECO:0000250" key="1">
    <source>
        <dbReference type="UniProtKB" id="P62820"/>
    </source>
</evidence>
<evidence type="ECO:0000250" key="2">
    <source>
        <dbReference type="UniProtKB" id="Q923S9"/>
    </source>
</evidence>
<evidence type="ECO:0000255" key="3"/>
<evidence type="ECO:0000255" key="4">
    <source>
        <dbReference type="PROSITE-ProRule" id="PRU00753"/>
    </source>
</evidence>
<evidence type="ECO:0000269" key="5">
    <source>
    </source>
</evidence>
<evidence type="ECO:0000269" key="6">
    <source>
    </source>
</evidence>
<evidence type="ECO:0000269" key="7">
    <source ref="12"/>
</evidence>
<evidence type="ECO:0000303" key="8">
    <source>
    </source>
</evidence>
<evidence type="ECO:0000305" key="9"/>
<evidence type="ECO:0000305" key="10">
    <source ref="12"/>
</evidence>
<evidence type="ECO:0000312" key="11">
    <source>
        <dbReference type="HGNC" id="HGNC:9770"/>
    </source>
</evidence>
<evidence type="ECO:0007744" key="12">
    <source>
        <dbReference type="PDB" id="2EW1"/>
    </source>
</evidence>
<evidence type="ECO:0007829" key="13">
    <source>
        <dbReference type="PDB" id="2EW1"/>
    </source>
</evidence>
<protein>
    <recommendedName>
        <fullName>Ras-related protein Rab-30</fullName>
        <ecNumber evidence="1">3.6.5.2</ecNumber>
    </recommendedName>
</protein>
<sequence>MSMEDYDFLFKIVLIGNAGVGKTCLVRRFTQGLFPPGQGATIGVDFMIKTVEINGEKVKLQIWDTAGQERFRSITQSYYRSANALILTYDITCEESFRCLPEWLREIEQYASNKVITVLVGNKIDLAERREVSQQRAEEFSEAQDMYYLETSAKESDNVEKLFLDLACRLISEARQNTLVNNVSSPLPGEGKSISYLTCCNFN</sequence>
<name>RAB30_HUMAN</name>
<dbReference type="EC" id="3.6.5.2" evidence="1"/>
<dbReference type="EMBL" id="U57092">
    <property type="protein sequence ID" value="AAC50774.1"/>
    <property type="molecule type" value="mRNA"/>
</dbReference>
<dbReference type="EMBL" id="AF498956">
    <property type="protein sequence ID" value="AAM21104.1"/>
    <property type="molecule type" value="mRNA"/>
</dbReference>
<dbReference type="EMBL" id="CR542106">
    <property type="protein sequence ID" value="CAG46903.1"/>
    <property type="molecule type" value="mRNA"/>
</dbReference>
<dbReference type="EMBL" id="BX641138">
    <property type="protein sequence ID" value="CAE46061.1"/>
    <property type="molecule type" value="mRNA"/>
</dbReference>
<dbReference type="EMBL" id="AP000893">
    <property type="status" value="NOT_ANNOTATED_CDS"/>
    <property type="molecule type" value="Genomic_DNA"/>
</dbReference>
<dbReference type="EMBL" id="AP001767">
    <property type="status" value="NOT_ANNOTATED_CDS"/>
    <property type="molecule type" value="Genomic_DNA"/>
</dbReference>
<dbReference type="EMBL" id="BC014213">
    <property type="protein sequence ID" value="AAH14213.1"/>
    <property type="molecule type" value="mRNA"/>
</dbReference>
<dbReference type="CCDS" id="CCDS8264.1">
    <molecule id="Q15771-1"/>
</dbReference>
<dbReference type="PIR" id="JC4962">
    <property type="entry name" value="JC4962"/>
</dbReference>
<dbReference type="RefSeq" id="NP_001272988.1">
    <molecule id="Q15771-1"/>
    <property type="nucleotide sequence ID" value="NM_001286059.2"/>
</dbReference>
<dbReference type="RefSeq" id="NP_001272989.1">
    <molecule id="Q15771-1"/>
    <property type="nucleotide sequence ID" value="NM_001286060.2"/>
</dbReference>
<dbReference type="RefSeq" id="NP_001272990.1">
    <molecule id="Q15771-1"/>
    <property type="nucleotide sequence ID" value="NM_001286061.1"/>
</dbReference>
<dbReference type="RefSeq" id="NP_055303.2">
    <molecule id="Q15771-1"/>
    <property type="nucleotide sequence ID" value="NM_014488.4"/>
</dbReference>
<dbReference type="PDB" id="2EW1">
    <property type="method" value="X-ray"/>
    <property type="resolution" value="2.00 A"/>
    <property type="chains" value="A=2-184"/>
</dbReference>
<dbReference type="PDBsum" id="2EW1"/>
<dbReference type="SMR" id="Q15771"/>
<dbReference type="BioGRID" id="118132">
    <property type="interactions" value="34"/>
</dbReference>
<dbReference type="DIP" id="DIP-60519N"/>
<dbReference type="FunCoup" id="Q15771">
    <property type="interactions" value="1656"/>
</dbReference>
<dbReference type="IntAct" id="Q15771">
    <property type="interactions" value="32"/>
</dbReference>
<dbReference type="STRING" id="9606.ENSP00000435189"/>
<dbReference type="iPTMnet" id="Q15771"/>
<dbReference type="PhosphoSitePlus" id="Q15771"/>
<dbReference type="BioMuta" id="RAB30"/>
<dbReference type="DMDM" id="38258937"/>
<dbReference type="jPOST" id="Q15771"/>
<dbReference type="MassIVE" id="Q15771"/>
<dbReference type="PaxDb" id="9606-ENSP00000435189"/>
<dbReference type="PeptideAtlas" id="Q15771"/>
<dbReference type="ProteomicsDB" id="60750">
    <molecule id="Q15771-1"/>
</dbReference>
<dbReference type="ProteomicsDB" id="66570"/>
<dbReference type="Pumba" id="Q15771"/>
<dbReference type="Antibodypedia" id="31346">
    <property type="antibodies" value="301 antibodies from 25 providers"/>
</dbReference>
<dbReference type="DNASU" id="27314"/>
<dbReference type="Ensembl" id="ENST00000260056.6">
    <molecule id="Q15771-1"/>
    <property type="protein sequence ID" value="ENSP00000260056.2"/>
    <property type="gene ID" value="ENSG00000137502.10"/>
</dbReference>
<dbReference type="Ensembl" id="ENST00000527633.6">
    <molecule id="Q15771-1"/>
    <property type="protein sequence ID" value="ENSP00000435089.1"/>
    <property type="gene ID" value="ENSG00000137502.10"/>
</dbReference>
<dbReference type="Ensembl" id="ENST00000533486.5">
    <molecule id="Q15771-1"/>
    <property type="protein sequence ID" value="ENSP00000435189.1"/>
    <property type="gene ID" value="ENSG00000137502.10"/>
</dbReference>
<dbReference type="Ensembl" id="ENST00000534141.5">
    <molecule id="Q15771-2"/>
    <property type="protein sequence ID" value="ENSP00000434974.1"/>
    <property type="gene ID" value="ENSG00000137502.10"/>
</dbReference>
<dbReference type="Ensembl" id="ENST00000612684.4">
    <molecule id="Q15771-1"/>
    <property type="protein sequence ID" value="ENSP00000478702.1"/>
    <property type="gene ID" value="ENSG00000137502.10"/>
</dbReference>
<dbReference type="GeneID" id="27314"/>
<dbReference type="KEGG" id="hsa:27314"/>
<dbReference type="MANE-Select" id="ENST00000527633.6">
    <property type="protein sequence ID" value="ENSP00000435089.1"/>
    <property type="RefSeq nucleotide sequence ID" value="NM_001286060.2"/>
    <property type="RefSeq protein sequence ID" value="NP_001272989.1"/>
</dbReference>
<dbReference type="UCSC" id="uc001ozu.5">
    <molecule id="Q15771-1"/>
    <property type="organism name" value="human"/>
</dbReference>
<dbReference type="AGR" id="HGNC:9770"/>
<dbReference type="CTD" id="27314"/>
<dbReference type="DisGeNET" id="27314"/>
<dbReference type="GeneCards" id="RAB30"/>
<dbReference type="HGNC" id="HGNC:9770">
    <property type="gene designation" value="RAB30"/>
</dbReference>
<dbReference type="HPA" id="ENSG00000137502">
    <property type="expression patterns" value="Low tissue specificity"/>
</dbReference>
<dbReference type="MIM" id="605693">
    <property type="type" value="gene"/>
</dbReference>
<dbReference type="neXtProt" id="NX_Q15771"/>
<dbReference type="OpenTargets" id="ENSG00000137502"/>
<dbReference type="PharmGKB" id="PA34121"/>
<dbReference type="VEuPathDB" id="HostDB:ENSG00000137502"/>
<dbReference type="eggNOG" id="KOG0095">
    <property type="taxonomic scope" value="Eukaryota"/>
</dbReference>
<dbReference type="GeneTree" id="ENSGT00940000156875"/>
<dbReference type="HOGENOM" id="CLU_041217_10_1_1"/>
<dbReference type="InParanoid" id="Q15771"/>
<dbReference type="OMA" id="VYDVSCQ"/>
<dbReference type="OrthoDB" id="9989112at2759"/>
<dbReference type="PAN-GO" id="Q15771">
    <property type="GO annotations" value="3 GO annotations based on evolutionary models"/>
</dbReference>
<dbReference type="PhylomeDB" id="Q15771"/>
<dbReference type="TreeFam" id="TF300097"/>
<dbReference type="PathwayCommons" id="Q15771"/>
<dbReference type="Reactome" id="R-HSA-6811438">
    <property type="pathway name" value="Intra-Golgi traffic"/>
</dbReference>
<dbReference type="Reactome" id="R-HSA-8873719">
    <property type="pathway name" value="RAB geranylgeranylation"/>
</dbReference>
<dbReference type="SignaLink" id="Q15771"/>
<dbReference type="BioGRID-ORCS" id="27314">
    <property type="hits" value="11 hits in 1146 CRISPR screens"/>
</dbReference>
<dbReference type="ChiTaRS" id="RAB30">
    <property type="organism name" value="human"/>
</dbReference>
<dbReference type="EvolutionaryTrace" id="Q15771"/>
<dbReference type="GenomeRNAi" id="27314"/>
<dbReference type="Pharos" id="Q15771">
    <property type="development level" value="Tbio"/>
</dbReference>
<dbReference type="PRO" id="PR:Q15771"/>
<dbReference type="Proteomes" id="UP000005640">
    <property type="component" value="Chromosome 11"/>
</dbReference>
<dbReference type="RNAct" id="Q15771">
    <property type="molecule type" value="protein"/>
</dbReference>
<dbReference type="Bgee" id="ENSG00000137502">
    <property type="expression patterns" value="Expressed in medial globus pallidus and 179 other cell types or tissues"/>
</dbReference>
<dbReference type="ExpressionAtlas" id="Q15771">
    <property type="expression patterns" value="baseline and differential"/>
</dbReference>
<dbReference type="GO" id="GO:0005801">
    <property type="term" value="C:cis-Golgi network"/>
    <property type="evidence" value="ECO:0000314"/>
    <property type="project" value="UniProtKB"/>
</dbReference>
<dbReference type="GO" id="GO:0031985">
    <property type="term" value="C:Golgi cisterna"/>
    <property type="evidence" value="ECO:0000314"/>
    <property type="project" value="UniProtKB"/>
</dbReference>
<dbReference type="GO" id="GO:0000139">
    <property type="term" value="C:Golgi membrane"/>
    <property type="evidence" value="ECO:0000304"/>
    <property type="project" value="Reactome"/>
</dbReference>
<dbReference type="GO" id="GO:0005795">
    <property type="term" value="C:Golgi stack"/>
    <property type="evidence" value="ECO:0000304"/>
    <property type="project" value="ProtInc"/>
</dbReference>
<dbReference type="GO" id="GO:0043231">
    <property type="term" value="C:intracellular membrane-bounded organelle"/>
    <property type="evidence" value="ECO:0000314"/>
    <property type="project" value="HPA"/>
</dbReference>
<dbReference type="GO" id="GO:0005802">
    <property type="term" value="C:trans-Golgi network"/>
    <property type="evidence" value="ECO:0000314"/>
    <property type="project" value="UniProtKB"/>
</dbReference>
<dbReference type="GO" id="GO:0005525">
    <property type="term" value="F:GTP binding"/>
    <property type="evidence" value="ECO:0000318"/>
    <property type="project" value="GO_Central"/>
</dbReference>
<dbReference type="GO" id="GO:0003924">
    <property type="term" value="F:GTPase activity"/>
    <property type="evidence" value="ECO:0000318"/>
    <property type="project" value="GO_Central"/>
</dbReference>
<dbReference type="GO" id="GO:0007030">
    <property type="term" value="P:Golgi organization"/>
    <property type="evidence" value="ECO:0000315"/>
    <property type="project" value="UniProtKB"/>
</dbReference>
<dbReference type="GO" id="GO:0032482">
    <property type="term" value="P:Rab protein signal transduction"/>
    <property type="evidence" value="ECO:0007669"/>
    <property type="project" value="InterPro"/>
</dbReference>
<dbReference type="GO" id="GO:0016192">
    <property type="term" value="P:vesicle-mediated transport"/>
    <property type="evidence" value="ECO:0000318"/>
    <property type="project" value="GO_Central"/>
</dbReference>
<dbReference type="CDD" id="cd04114">
    <property type="entry name" value="Rab30"/>
    <property type="match status" value="1"/>
</dbReference>
<dbReference type="FunFam" id="3.40.50.300:FF:000440">
    <property type="entry name" value="Ras-related protein Rab-30"/>
    <property type="match status" value="1"/>
</dbReference>
<dbReference type="Gene3D" id="3.40.50.300">
    <property type="entry name" value="P-loop containing nucleotide triphosphate hydrolases"/>
    <property type="match status" value="1"/>
</dbReference>
<dbReference type="InterPro" id="IPR027417">
    <property type="entry name" value="P-loop_NTPase"/>
</dbReference>
<dbReference type="InterPro" id="IPR050227">
    <property type="entry name" value="Rab"/>
</dbReference>
<dbReference type="InterPro" id="IPR041820">
    <property type="entry name" value="Rab30"/>
</dbReference>
<dbReference type="InterPro" id="IPR005225">
    <property type="entry name" value="Small_GTP-bd"/>
</dbReference>
<dbReference type="InterPro" id="IPR001806">
    <property type="entry name" value="Small_GTPase"/>
</dbReference>
<dbReference type="NCBIfam" id="TIGR00231">
    <property type="entry name" value="small_GTP"/>
    <property type="match status" value="1"/>
</dbReference>
<dbReference type="PANTHER" id="PTHR47977">
    <property type="entry name" value="RAS-RELATED PROTEIN RAB"/>
    <property type="match status" value="1"/>
</dbReference>
<dbReference type="Pfam" id="PF00071">
    <property type="entry name" value="Ras"/>
    <property type="match status" value="1"/>
</dbReference>
<dbReference type="PRINTS" id="PR00449">
    <property type="entry name" value="RASTRNSFRMNG"/>
</dbReference>
<dbReference type="SMART" id="SM00175">
    <property type="entry name" value="RAB"/>
    <property type="match status" value="1"/>
</dbReference>
<dbReference type="SMART" id="SM00176">
    <property type="entry name" value="RAN"/>
    <property type="match status" value="1"/>
</dbReference>
<dbReference type="SMART" id="SM00173">
    <property type="entry name" value="RAS"/>
    <property type="match status" value="1"/>
</dbReference>
<dbReference type="SMART" id="SM00174">
    <property type="entry name" value="RHO"/>
    <property type="match status" value="1"/>
</dbReference>
<dbReference type="SUPFAM" id="SSF52540">
    <property type="entry name" value="P-loop containing nucleoside triphosphate hydrolases"/>
    <property type="match status" value="1"/>
</dbReference>
<dbReference type="PROSITE" id="PS51419">
    <property type="entry name" value="RAB"/>
    <property type="match status" value="1"/>
</dbReference>
<gene>
    <name evidence="11" type="primary">RAB30</name>
</gene>
<organism>
    <name type="scientific">Homo sapiens</name>
    <name type="common">Human</name>
    <dbReference type="NCBI Taxonomy" id="9606"/>
    <lineage>
        <taxon>Eukaryota</taxon>
        <taxon>Metazoa</taxon>
        <taxon>Chordata</taxon>
        <taxon>Craniata</taxon>
        <taxon>Vertebrata</taxon>
        <taxon>Euteleostomi</taxon>
        <taxon>Mammalia</taxon>
        <taxon>Eutheria</taxon>
        <taxon>Euarchontoglires</taxon>
        <taxon>Primates</taxon>
        <taxon>Haplorrhini</taxon>
        <taxon>Catarrhini</taxon>
        <taxon>Hominidae</taxon>
        <taxon>Homo</taxon>
    </lineage>
</organism>